<comment type="function">
    <text evidence="13 18">Guanyl-nucleotide exchange factor that activates RHO-like proteins and connects extracellular signals to cytoskeletal activities. Activates RAC1, CDC42, and to a lesser extent RHOA and their downstream signaling to regulate processes like cell adhesion and cell migration.</text>
</comment>
<comment type="subunit">
    <text evidence="1 10 12 13 14 16 17 21">Component of the Par polarity complex, composed of at least phosphorylated PRKCZ, PARD3 and TIAM1. Interacts with NTRK2; mediates the activation of RAC1 by BDNF. Interacts with MAPK8IP2 and CD44 (By similarity). Interacts with BAIAP2. Interacts with EPHA8; regulates clathrin-mediated endocytosis of EPHA8. Interacts with PARD3. Interacts (via PDZ domain) with CNTNAP4, SDC1 and SDC3 (via C-terminus).</text>
</comment>
<comment type="interaction">
    <interactant intactId="EBI-1050007">
        <id>Q13009</id>
    </interactant>
    <interactant intactId="EBI-1215506">
        <id>O14936</id>
        <label>CASK</label>
    </interactant>
    <organismsDiffer>false</organismsDiffer>
    <experiments>3</experiments>
</comment>
<comment type="interaction">
    <interactant intactId="EBI-1050007">
        <id>Q13009</id>
    </interactant>
    <interactant intactId="EBI-16035743">
        <id>Q9C0A0-1</id>
        <label>CNTNAP4</label>
    </interactant>
    <organismsDiffer>false</organismsDiffer>
    <experiments>2</experiments>
</comment>
<comment type="interaction">
    <interactant intactId="EBI-1050007">
        <id>Q13009</id>
    </interactant>
    <interactant intactId="EBI-473695">
        <id>Q8WVZ9</id>
        <label>KBTBD7</label>
    </interactant>
    <organismsDiffer>false</organismsDiffer>
    <experiments>2</experiments>
</comment>
<comment type="interaction">
    <interactant intactId="EBI-1050007">
        <id>Q13009</id>
    </interactant>
    <interactant intactId="EBI-2855248">
        <id>P18827</id>
        <label>SDC1</label>
    </interactant>
    <organismsDiffer>false</organismsDiffer>
    <experiments>5</experiments>
</comment>
<comment type="interaction">
    <interactant intactId="EBI-1050007">
        <id>Q13009</id>
    </interactant>
    <interactant intactId="EBI-537711">
        <id>P54763</id>
        <label>Ephb2</label>
    </interactant>
    <organismsDiffer>true</organismsDiffer>
    <experiments>3</experiments>
</comment>
<comment type="subcellular location">
    <subcellularLocation>
        <location>Cell junction</location>
    </subcellularLocation>
    <subcellularLocation>
        <location>Cell membrane</location>
        <topology>Peripheral membrane protein</topology>
        <orientation>Cytoplasmic side</orientation>
    </subcellularLocation>
    <text evidence="1">Detected at the boundary between cells with actin-rich protrusions (By similarity). Presence of KRIT1, CDH5 and RAP1B is required for its localization to the cell junction.</text>
</comment>
<comment type="alternative products">
    <event type="alternative splicing"/>
    <isoform>
        <id>Q13009-1</id>
        <name>1</name>
        <sequence type="displayed"/>
    </isoform>
    <isoform>
        <id>Q13009-2</id>
        <name>2</name>
        <sequence type="described" ref="VSP_055865 VSP_055866"/>
    </isoform>
</comment>
<comment type="tissue specificity">
    <text>Found in virtually all analyzed tumor cell lines including B- and T-lymphomas, neuroblastomas, melanomas and carcinomas.</text>
</comment>
<comment type="domain">
    <text evidence="1">The first PH domain mediates interaction with membranes enriched in phosphoinositides.</text>
</comment>
<comment type="PTM">
    <text evidence="18">Ubiquitinated. Undergoes 'Lys-48' ubiquitination at Lys-1404 and Lys-1420 by a CUL3(KBTBD6/7) E3 ubiquitin ligase complex composed of CUL3, RBX1, KBTBD6 and KBTBD7. 'Lys-48' ubiquitination at Lys-1404 and Lys-1420 triggers proteasomal degradation (PubMed:25684205). Ubiquitination at Lys-1404 and Lys-1420 by CUL3(KBTBD6/7) also requires the membrane-associated protein GABARAP and may therefore be spatially restricted within the cell (PubMed:25684205).</text>
</comment>
<comment type="disease" evidence="19">
    <disease id="DI-06427">
        <name>Neurodevelopmental disorder with language delay and seizures</name>
        <acronym>NEDLDS</acronym>
        <description>An autosomal recessive disorder characterized by global developmental delay, intellectual disability, speech delay, and seizures. Additional features may include axial hypotonia, peripheral hypertonia, hypothyroidism, and non-specific dysmorphic features or brain imaging abnormalities.</description>
        <dbReference type="MIM" id="619908"/>
    </disease>
    <text>The disease may be caused by variants affecting the gene represented in this entry.</text>
</comment>
<comment type="similarity">
    <text evidence="24">Belongs to the TIAM family.</text>
</comment>
<comment type="online information" name="Atlas of Genetics and Cytogenetics in Oncology and Haematology">
    <link uri="https://atlasgeneticsoncology.org/gene/42557/TIAM1"/>
</comment>
<protein>
    <recommendedName>
        <fullName evidence="25">Rho guanine nucleotide exchange factor TIAM1</fullName>
    </recommendedName>
    <alternativeName>
        <fullName evidence="2">T-lymphoma invasion and metastasis-inducing protein 1</fullName>
        <shortName evidence="2">TIAM-1</shortName>
    </alternativeName>
</protein>
<evidence type="ECO:0000250" key="1"/>
<evidence type="ECO:0000250" key="2">
    <source>
        <dbReference type="UniProtKB" id="Q60610"/>
    </source>
</evidence>
<evidence type="ECO:0000255" key="3"/>
<evidence type="ECO:0000255" key="4">
    <source>
        <dbReference type="PROSITE-ProRule" id="PRU00062"/>
    </source>
</evidence>
<evidence type="ECO:0000255" key="5">
    <source>
        <dbReference type="PROSITE-ProRule" id="PRU00143"/>
    </source>
</evidence>
<evidence type="ECO:0000255" key="6">
    <source>
        <dbReference type="PROSITE-ProRule" id="PRU00145"/>
    </source>
</evidence>
<evidence type="ECO:0000255" key="7">
    <source>
        <dbReference type="PROSITE-ProRule" id="PRU00262"/>
    </source>
</evidence>
<evidence type="ECO:0000256" key="8">
    <source>
        <dbReference type="SAM" id="MobiDB-lite"/>
    </source>
</evidence>
<evidence type="ECO:0000269" key="9">
    <source>
    </source>
</evidence>
<evidence type="ECO:0000269" key="10">
    <source>
    </source>
</evidence>
<evidence type="ECO:0000269" key="11">
    <source>
    </source>
</evidence>
<evidence type="ECO:0000269" key="12">
    <source>
    </source>
</evidence>
<evidence type="ECO:0000269" key="13">
    <source>
    </source>
</evidence>
<evidence type="ECO:0000269" key="14">
    <source>
    </source>
</evidence>
<evidence type="ECO:0000269" key="15">
    <source>
    </source>
</evidence>
<evidence type="ECO:0000269" key="16">
    <source>
    </source>
</evidence>
<evidence type="ECO:0000269" key="17">
    <source>
    </source>
</evidence>
<evidence type="ECO:0000269" key="18">
    <source>
    </source>
</evidence>
<evidence type="ECO:0000269" key="19">
    <source>
    </source>
</evidence>
<evidence type="ECO:0000269" key="20">
    <source>
    </source>
</evidence>
<evidence type="ECO:0000269" key="21">
    <source>
    </source>
</evidence>
<evidence type="ECO:0000303" key="22">
    <source>
    </source>
</evidence>
<evidence type="ECO:0000303" key="23">
    <source>
    </source>
</evidence>
<evidence type="ECO:0000305" key="24"/>
<evidence type="ECO:0000305" key="25">
    <source>
    </source>
</evidence>
<evidence type="ECO:0000312" key="26">
    <source>
        <dbReference type="HGNC" id="HGNC:11805"/>
    </source>
</evidence>
<evidence type="ECO:0007744" key="27">
    <source>
    </source>
</evidence>
<evidence type="ECO:0007744" key="28">
    <source>
    </source>
</evidence>
<evidence type="ECO:0007744" key="29">
    <source>
    </source>
</evidence>
<evidence type="ECO:0007829" key="30">
    <source>
        <dbReference type="PDB" id="3KZD"/>
    </source>
</evidence>
<evidence type="ECO:0007829" key="31">
    <source>
        <dbReference type="PDB" id="3KZE"/>
    </source>
</evidence>
<evidence type="ECO:0007829" key="32">
    <source>
        <dbReference type="PDB" id="4K2P"/>
    </source>
</evidence>
<evidence type="ECO:0007829" key="33">
    <source>
        <dbReference type="PDB" id="4NXR"/>
    </source>
</evidence>
<name>TIAM1_HUMAN</name>
<gene>
    <name evidence="23 26" type="primary">TIAM1</name>
</gene>
<reference key="1">
    <citation type="journal article" date="1995" name="Oncogene">
        <title>Sequence of the human invasion-inducing TIAM1 gene, its conservation in evolution and its expression in tumor cell lines of different tissue origin.</title>
        <authorList>
            <person name="Habets G.G.M."/>
            <person name="van der Kammen R.A."/>
            <person name="Stam J.C."/>
            <person name="Michiels F."/>
            <person name="Collard J.G."/>
        </authorList>
    </citation>
    <scope>NUCLEOTIDE SEQUENCE [MRNA] (ISOFORM 1)</scope>
    <scope>VARIANT HIS-844</scope>
    <source>
        <tissue>Fetal brain</tissue>
    </source>
</reference>
<reference key="2">
    <citation type="journal article" date="2000" name="Nature">
        <title>The DNA sequence of human chromosome 21.</title>
        <authorList>
            <person name="Hattori M."/>
            <person name="Fujiyama A."/>
            <person name="Taylor T.D."/>
            <person name="Watanabe H."/>
            <person name="Yada T."/>
            <person name="Park H.-S."/>
            <person name="Toyoda A."/>
            <person name="Ishii K."/>
            <person name="Totoki Y."/>
            <person name="Choi D.-K."/>
            <person name="Groner Y."/>
            <person name="Soeda E."/>
            <person name="Ohki M."/>
            <person name="Takagi T."/>
            <person name="Sakaki Y."/>
            <person name="Taudien S."/>
            <person name="Blechschmidt K."/>
            <person name="Polley A."/>
            <person name="Menzel U."/>
            <person name="Delabar J."/>
            <person name="Kumpf K."/>
            <person name="Lehmann R."/>
            <person name="Patterson D."/>
            <person name="Reichwald K."/>
            <person name="Rump A."/>
            <person name="Schillhabel M."/>
            <person name="Schudy A."/>
            <person name="Zimmermann W."/>
            <person name="Rosenthal A."/>
            <person name="Kudoh J."/>
            <person name="Shibuya K."/>
            <person name="Kawasaki K."/>
            <person name="Asakawa S."/>
            <person name="Shintani A."/>
            <person name="Sasaki T."/>
            <person name="Nagamine K."/>
            <person name="Mitsuyama S."/>
            <person name="Antonarakis S.E."/>
            <person name="Minoshima S."/>
            <person name="Shimizu N."/>
            <person name="Nordsiek G."/>
            <person name="Hornischer K."/>
            <person name="Brandt P."/>
            <person name="Scharfe M."/>
            <person name="Schoen O."/>
            <person name="Desario A."/>
            <person name="Reichelt J."/>
            <person name="Kauer G."/>
            <person name="Bloecker H."/>
            <person name="Ramser J."/>
            <person name="Beck A."/>
            <person name="Klages S."/>
            <person name="Hennig S."/>
            <person name="Riesselmann L."/>
            <person name="Dagand E."/>
            <person name="Wehrmeyer S."/>
            <person name="Borzym K."/>
            <person name="Gardiner K."/>
            <person name="Nizetic D."/>
            <person name="Francis F."/>
            <person name="Lehrach H."/>
            <person name="Reinhardt R."/>
            <person name="Yaspo M.-L."/>
        </authorList>
    </citation>
    <scope>NUCLEOTIDE SEQUENCE [LARGE SCALE GENOMIC DNA]</scope>
</reference>
<reference key="3">
    <citation type="journal article" date="2004" name="Genome Res.">
        <title>The status, quality, and expansion of the NIH full-length cDNA project: the Mammalian Gene Collection (MGC).</title>
        <authorList>
            <consortium name="The MGC Project Team"/>
        </authorList>
    </citation>
    <scope>NUCLEOTIDE SEQUENCE [LARGE SCALE MRNA] (ISOFORMS 1 AND 2)</scope>
    <scope>VARIANT VAL-1023</scope>
</reference>
<reference key="4">
    <citation type="journal article" date="1995" name="Nature">
        <title>A role for Rac in Tiam1-induced membrane ruffling and invasion.</title>
        <authorList>
            <person name="Michiels F."/>
            <person name="Habets G.G.M."/>
            <person name="Stam J.C."/>
            <person name="van der Kammen R.A."/>
            <person name="Collard J.G."/>
        </authorList>
    </citation>
    <scope>INTERACTION WITH RAC</scope>
    <source>
        <tissue>Brain</tissue>
    </source>
</reference>
<reference key="5">
    <citation type="journal article" date="1995" name="Cytogenet. Cell Genet.">
        <title>The invasion-inducing TIAM1 gene maps to human chromosome band 21q22 and mouse chromosome 16.</title>
        <authorList>
            <person name="Habets G.G.M."/>
            <person name="van der Kammen R.A."/>
            <person name="Jenkins N.A."/>
            <person name="Gilbert D.J."/>
            <person name="Copeland N.G."/>
            <person name="Hagemeijer A."/>
            <person name="Collard J.G."/>
        </authorList>
    </citation>
    <scope>CHROMOSOMAL LOCATION</scope>
</reference>
<reference key="6">
    <citation type="journal article" date="2005" name="Mol. Cell. Biol.">
        <title>Tiam1-IRSp53 complex formation directs specificity of rac-mediated actin cytoskeleton regulation.</title>
        <authorList>
            <person name="Connolly B.A."/>
            <person name="Rice J."/>
            <person name="Feig L.A."/>
            <person name="Buchsbaum R.J."/>
        </authorList>
    </citation>
    <scope>INTERACTION WITH BAIAP2</scope>
</reference>
<reference key="7">
    <citation type="journal article" date="2009" name="Anal. Chem.">
        <title>Lys-N and trypsin cover complementary parts of the phosphoproteome in a refined SCX-based approach.</title>
        <authorList>
            <person name="Gauci S."/>
            <person name="Helbig A.O."/>
            <person name="Slijper M."/>
            <person name="Krijgsveld J."/>
            <person name="Heck A.J."/>
            <person name="Mohammed S."/>
        </authorList>
    </citation>
    <scope>IDENTIFICATION BY MASS SPECTROMETRY [LARGE SCALE ANALYSIS]</scope>
</reference>
<reference key="8">
    <citation type="journal article" date="2009" name="Mol. Cell. Proteomics">
        <title>Large-scale proteomics analysis of the human kinome.</title>
        <authorList>
            <person name="Oppermann F.S."/>
            <person name="Gnad F."/>
            <person name="Olsen J.V."/>
            <person name="Hornberger R."/>
            <person name="Greff Z."/>
            <person name="Keri G."/>
            <person name="Mann M."/>
            <person name="Daub H."/>
        </authorList>
    </citation>
    <scope>PHOSPHORYLATION [LARGE SCALE ANALYSIS] AT SER-231</scope>
    <scope>IDENTIFICATION BY MASS SPECTROMETRY [LARGE SCALE ANALYSIS]</scope>
</reference>
<reference key="9">
    <citation type="journal article" date="2009" name="Sci. Signal.">
        <title>Quantitative phosphoproteomic analysis of T cell receptor signaling reveals system-wide modulation of protein-protein interactions.</title>
        <authorList>
            <person name="Mayya V."/>
            <person name="Lundgren D.H."/>
            <person name="Hwang S.-I."/>
            <person name="Rezaul K."/>
            <person name="Wu L."/>
            <person name="Eng J.K."/>
            <person name="Rodionov V."/>
            <person name="Han D.K."/>
        </authorList>
    </citation>
    <scope>PHOSPHORYLATION [LARGE SCALE ANALYSIS] AT SER-231</scope>
    <scope>IDENTIFICATION BY MASS SPECTROMETRY [LARGE SCALE ANALYSIS]</scope>
    <source>
        <tissue>Leukemic T-cell</tissue>
    </source>
</reference>
<reference key="10">
    <citation type="journal article" date="2010" name="J. Cell Sci.">
        <title>CCM1 regulates vascular-lumen organization by inducing endothelial polarity.</title>
        <authorList>
            <person name="Lampugnani M.G."/>
            <person name="Orsenigo F."/>
            <person name="Rudini N."/>
            <person name="Maddaluno L."/>
            <person name="Boulday G."/>
            <person name="Chapon F."/>
            <person name="Dejana E."/>
        </authorList>
    </citation>
    <scope>SUBCELLULAR LOCATION</scope>
    <scope>SUBUNIT</scope>
</reference>
<reference key="11">
    <citation type="journal article" date="2010" name="Mol. Cells">
        <title>EphA8-ephrinA5 signaling and clathrin-mediated endocytosis is regulated by Tiam-1, a Rac-specific guanine nucleotide exchange factor.</title>
        <authorList>
            <person name="Yoo S."/>
            <person name="Shin J."/>
            <person name="Park S."/>
        </authorList>
    </citation>
    <scope>INTERACTION WITH EPHA8</scope>
</reference>
<reference key="12">
    <citation type="journal article" date="2011" name="Sci. Signal.">
        <title>System-wide temporal characterization of the proteome and phosphoproteome of human embryonic stem cell differentiation.</title>
        <authorList>
            <person name="Rigbolt K.T."/>
            <person name="Prokhorova T.A."/>
            <person name="Akimov V."/>
            <person name="Henningsen J."/>
            <person name="Johansen P.T."/>
            <person name="Kratchmarova I."/>
            <person name="Kassem M."/>
            <person name="Mann M."/>
            <person name="Olsen J.V."/>
            <person name="Blagoev B."/>
        </authorList>
    </citation>
    <scope>PHOSPHORYLATION [LARGE SCALE ANALYSIS] AT SER-231</scope>
    <scope>IDENTIFICATION BY MASS SPECTROMETRY [LARGE SCALE ANALYSIS]</scope>
</reference>
<reference key="13">
    <citation type="journal article" date="2015" name="Mol. Cell">
        <title>CUL3-KBTBD6/KBTBD7 ubiquitin ligase cooperates with GABARAP proteins to spatially restrict TIAM1-RAC1 signaling.</title>
        <authorList>
            <person name="Genau H.M."/>
            <person name="Huber J."/>
            <person name="Baschieri F."/>
            <person name="Akutsu M."/>
            <person name="Doetsch V."/>
            <person name="Farhan H."/>
            <person name="Rogov V."/>
            <person name="Behrends C."/>
        </authorList>
    </citation>
    <scope>FUNCTION</scope>
    <scope>UBIQUITINATION AT LYS-1404 AND LYS-1420</scope>
    <scope>MUTAGENESIS OF LYS-1404 AND LYS-1420</scope>
</reference>
<reference key="14">
    <citation type="submission" date="2006-06" db="PDB data bank">
        <title>Solution structure of the PDZ domain of T-cell lymphoma invasion and metastasis 1 variant.</title>
        <authorList>
            <consortium name="RIKEN structural genomics initiative (RSGI)"/>
        </authorList>
    </citation>
    <scope>STRUCTURE BY NMR OF 835-935</scope>
</reference>
<reference key="15">
    <citation type="journal article" date="2010" name="J. Mol. Biol.">
        <title>The Tiam1 PDZ domain couples to Syndecan1 and promotes cell-matrix adhesion.</title>
        <authorList>
            <person name="Shepherd T.R."/>
            <person name="Klaus S.M."/>
            <person name="Liu X."/>
            <person name="Ramaswamy S."/>
            <person name="DeMali K.A."/>
            <person name="Fuentes E.J."/>
        </authorList>
    </citation>
    <scope>X-RAY CRYSTALLOGRAPHY (1.30 ANGSTROMS) OF 841-930 IN COMPLEX WITH SYNTHETIC MODEL PEPTIDE</scope>
    <scope>FUNCTION</scope>
    <scope>SUBCELLULAR LOCATION</scope>
    <scope>INTERACTION WITH SDC1 AND CNTNAP4</scope>
</reference>
<reference key="16">
    <citation type="journal article" date="2013" name="Acta Crystallogr. F">
        <title>High-resolution structure of the Tiam1 PHn-CC-Ex domain.</title>
        <authorList>
            <person name="Joshi M."/>
            <person name="Gakhar L."/>
            <person name="Fuentes E.J."/>
        </authorList>
    </citation>
    <scope>X-RAY CRYSTALLOGRAPHY (1.98 ANGSTROMS) OF 429-702</scope>
    <scope>INTERACTION WITH PARD3</scope>
</reference>
<reference key="17">
    <citation type="journal article" date="2013" name="Structure">
        <title>The structure of the Tiam1 PDZ domain/ phospho-syndecan1 complex reveals a ligand conformation that modulates protein dynamics.</title>
        <authorList>
            <person name="Liu X."/>
            <person name="Shepherd T.R."/>
            <person name="Murray A.M."/>
            <person name="Xu Z."/>
            <person name="Fuentes E.J."/>
        </authorList>
    </citation>
    <scope>X-RAY CRYSTALLOGRAPHY (1.54 ANGSTROMS) OF 841-930 IN COMPLEX WITH SDC1</scope>
    <scope>MUTAGENESIS OF LYS-879 AND LYS-912</scope>
    <scope>INTERACTION WITH CNTNAP4; SDC1 AND SDC3</scope>
</reference>
<reference key="18">
    <citation type="journal article" date="2006" name="Science">
        <title>The consensus coding sequences of human breast and colorectal cancers.</title>
        <authorList>
            <person name="Sjoeblom T."/>
            <person name="Jones S."/>
            <person name="Wood L.D."/>
            <person name="Parsons D.W."/>
            <person name="Lin J."/>
            <person name="Barber T.D."/>
            <person name="Mandelker D."/>
            <person name="Leary R.J."/>
            <person name="Ptak J."/>
            <person name="Silliman N."/>
            <person name="Szabo S."/>
            <person name="Buckhaults P."/>
            <person name="Farrell C."/>
            <person name="Meeh P."/>
            <person name="Markowitz S.D."/>
            <person name="Willis J."/>
            <person name="Dawson D."/>
            <person name="Willson J.K.V."/>
            <person name="Gazdar A.F."/>
            <person name="Hartigan J."/>
            <person name="Wu L."/>
            <person name="Liu C."/>
            <person name="Parmigiani G."/>
            <person name="Park B.H."/>
            <person name="Bachman K.E."/>
            <person name="Papadopoulos N."/>
            <person name="Vogelstein B."/>
            <person name="Kinzler K.W."/>
            <person name="Velculescu V.E."/>
        </authorList>
    </citation>
    <scope>VARIANTS [LARGE SCALE ANALYSIS] CYS-678 AND VAL-1339</scope>
</reference>
<reference key="19">
    <citation type="journal article" date="2011" name="Am. J. Hum. Genet.">
        <title>Recessive mutations in ELOVL4 cause ichthyosis, intellectual disability, and spastic quadriplegia.</title>
        <authorList>
            <person name="Aldahmesh M.A."/>
            <person name="Mohamed J.Y."/>
            <person name="Alkuraya H.S."/>
            <person name="Verma I.C."/>
            <person name="Puri R.D."/>
            <person name="Alaiya A.A."/>
            <person name="Rizzo W.B."/>
            <person name="Alkuraya F.S."/>
        </authorList>
    </citation>
    <scope>VARIANT HIS-1007</scope>
</reference>
<reference key="20">
    <citation type="journal article" date="2022" name="Am. J. Hum. Genet.">
        <title>Loss-of-function variants in TIAM1 are associated with developmental delay, intellectual disability, and seizures.</title>
        <authorList>
            <person name="Lu S."/>
            <person name="Hernan R."/>
            <person name="Marcogliese P.C."/>
            <person name="Huang Y."/>
            <person name="Gertler T.S."/>
            <person name="Akcaboy M."/>
            <person name="Liu S."/>
            <person name="Chung H.L."/>
            <person name="Pan X."/>
            <person name="Sun X."/>
            <person name="Oguz M.M."/>
            <person name="Oztoprak U."/>
            <person name="de Baaij J.H.F."/>
            <person name="Ivanisevic J."/>
            <person name="McGinnis E."/>
            <person name="Guillen Sacoto M.J."/>
            <person name="Chung W.K."/>
            <person name="Bellen H.J."/>
        </authorList>
    </citation>
    <scope>VARIANTS NEDLDS CYS-23; VAL-328; ARG-382; PHE-862; VAL-1339 AND GLU-1547</scope>
    <scope>INVOLVEMENT IN NEDLDS</scope>
</reference>
<organism>
    <name type="scientific">Homo sapiens</name>
    <name type="common">Human</name>
    <dbReference type="NCBI Taxonomy" id="9606"/>
    <lineage>
        <taxon>Eukaryota</taxon>
        <taxon>Metazoa</taxon>
        <taxon>Chordata</taxon>
        <taxon>Craniata</taxon>
        <taxon>Vertebrata</taxon>
        <taxon>Euteleostomi</taxon>
        <taxon>Mammalia</taxon>
        <taxon>Eutheria</taxon>
        <taxon>Euarchontoglires</taxon>
        <taxon>Primates</taxon>
        <taxon>Haplorrhini</taxon>
        <taxon>Catarrhini</taxon>
        <taxon>Hominidae</taxon>
        <taxon>Homo</taxon>
    </lineage>
</organism>
<sequence>MGNAESQHVEHEFYGEKHASLGRKHTSRSLRLSHKTRRTRHASSGKVIHRNSEVSTRSSSTPSIPQSLAENGLEPFSQDGTLEDFGSPIWVDRVDMGLRPVSYTDSSVTPSVDSSIVLTAASVQSMPDTEESRLYGDDATYLAEGGRRQHSYTSNGPTFMETASFKKKRSKSADIWREDSLEFSLSDLSQEHLTSNEEILGSAEEKDCEEARGMETRASPRQLSTCQRANSLGDLYAQKNSGVTANGGPGSKFAGYCRNLVSDIPNLANHKMPPAAAEETPPYSNYNTLPCRKSHCLSEGATNPQISHSNSMQGRRAKTTQDVNAGEGSEFADSGIEGATTDTDLLSRRSNATNSSYSPTTGRAFVGSDSGSSSTGDAARQGVYENFRRELEMSTTNSESLEEAGSAHSDEQSSGTLSSPGQSDILLTAAQGTVRKAGALAVKNFLVHKKNKKVESATRRKWKHYWVSLKGCTLFFYESDGRSGIDHNSIPKHAVWVENSIVQAVPEHPKKDFVFCLSNSLGDAFLFQTTSQTELENWITAIHSACATAVARHHHKEDTLRLLKSEIKKLEQKIDMDEKMKKMGEMQLSSVTDSKKKKTILDQIFVWEQNLEQFQMDLFRFRCYLASLQGGELPNPKRLLAFASRPTKVAMGRLGIFSVSSFHALVAARTGETGVRRRTQAMSRSASKRRSRFSSLWGLDTTSKKKQGRPSINQVFGEGTEAVKKSLEGIFDDIVPDGKREKEVVLPNVHQHNPDCDIWVHEYFTPSWFCLPNNQPALTVVRPGDTARDTLELICKTHQLDHSAHYLRLKFLIENKMQLYVPQPEEDIYELLYKEIEICPKVTQSIHIEKSDTAADTYGFSLSSVEEDGIRRLYVNSVKETGLASKKGLKAGDEILEINNRAADALNSSMLKDFLSQPSLGLLVRTYPELEEGVELLESPPHRVDGPADLGESPLAFLTSNPGHSLCSEQGSSAETAPEETEGPDLESSDETDHSSKSTEQVAAFCRSLHEMNPSDQSPSPQDSTGPQLATMRQLSDADKLRKVICELLETERTYVKDLNCLMERYLKPLQKETFLTQDELDVLFGNLTEMVEFQVEFLKTLEDGVRLVPDLEKLEKVDQFKKVLFSLGGSFLYYADRFKLYSAFCASHTKVPKVLVKAKTDTAFKAFLDAQNPKQQHSSTLESYLIKPIQRILKYPLLLRELFALTDAESEEHYHLDVAIKTMNKVASHINEMQKIHEEFGAVFDQLIAEQTGEKKEVADLSMGDLLLHTTVIWLNPPASLGKWKKEPELAAFVFKTAVVLVYKDGSKQKKKLVGSHRLSIYEDWDPFRFRHMIPTEALQVRALASADAEANAVCEIVHVKSESEGRPERVFHLCCSSPESRKDFLKAVHSILRDKHRRQLLKTESLPSSQQYVPFGGKRLCALKGARPAMSRAVSAPSKSLGRRRRRLARNRFTIDSDAVSASSPEKESQQPPGGGDTDRWVEEQFDLAQYEEQDDIKETDILSDDDEFCESVKGASVDRDLQERLQATSISQRERGRKTLDSHASRMAQLKKQAALSGINGGLESASEEVIWVRREDFAPSRKLNTEI</sequence>
<proteinExistence type="evidence at protein level"/>
<keyword id="KW-0002">3D-structure</keyword>
<keyword id="KW-0025">Alternative splicing</keyword>
<keyword id="KW-0965">Cell junction</keyword>
<keyword id="KW-1003">Cell membrane</keyword>
<keyword id="KW-0887">Epilepsy</keyword>
<keyword id="KW-0344">Guanine-nucleotide releasing factor</keyword>
<keyword id="KW-0991">Intellectual disability</keyword>
<keyword id="KW-1017">Isopeptide bond</keyword>
<keyword id="KW-0446">Lipid-binding</keyword>
<keyword id="KW-0449">Lipoprotein</keyword>
<keyword id="KW-0472">Membrane</keyword>
<keyword id="KW-0519">Myristate</keyword>
<keyword id="KW-0597">Phosphoprotein</keyword>
<keyword id="KW-1267">Proteomics identification</keyword>
<keyword id="KW-1185">Reference proteome</keyword>
<keyword id="KW-0677">Repeat</keyword>
<keyword id="KW-0832">Ubl conjugation</keyword>
<accession>Q13009</accession>
<accession>B7ZLR6</accession>
<accession>F5GZ53</accession>
<accession>Q17RT7</accession>
<feature type="initiator methionine" description="Removed" evidence="3">
    <location>
        <position position="1"/>
    </location>
</feature>
<feature type="chain" id="PRO_0000080976" description="Rho guanine nucleotide exchange factor TIAM1">
    <location>
        <begin position="2"/>
        <end position="1591"/>
    </location>
</feature>
<feature type="domain" description="PH 1" evidence="6">
    <location>
        <begin position="434"/>
        <end position="549"/>
    </location>
</feature>
<feature type="domain" description="RBD" evidence="7">
    <location>
        <begin position="765"/>
        <end position="832"/>
    </location>
</feature>
<feature type="domain" description="PDZ" evidence="5">
    <location>
        <begin position="845"/>
        <end position="908"/>
    </location>
</feature>
<feature type="domain" description="DH" evidence="4">
    <location>
        <begin position="1040"/>
        <end position="1234"/>
    </location>
</feature>
<feature type="domain" description="PH 2" evidence="6">
    <location>
        <begin position="1261"/>
        <end position="1397"/>
    </location>
</feature>
<feature type="region of interest" description="Disordered" evidence="8">
    <location>
        <begin position="1"/>
        <end position="78"/>
    </location>
</feature>
<feature type="region of interest" description="Disordered" evidence="8">
    <location>
        <begin position="298"/>
        <end position="379"/>
    </location>
</feature>
<feature type="region of interest" description="Disordered" evidence="8">
    <location>
        <begin position="393"/>
        <end position="422"/>
    </location>
</feature>
<feature type="region of interest" description="Disordered" evidence="8">
    <location>
        <begin position="939"/>
        <end position="1034"/>
    </location>
</feature>
<feature type="region of interest" description="Disordered" evidence="8">
    <location>
        <begin position="1456"/>
        <end position="1482"/>
    </location>
</feature>
<feature type="compositionally biased region" description="Basic and acidic residues" evidence="8">
    <location>
        <begin position="7"/>
        <end position="19"/>
    </location>
</feature>
<feature type="compositionally biased region" description="Basic residues" evidence="8">
    <location>
        <begin position="20"/>
        <end position="49"/>
    </location>
</feature>
<feature type="compositionally biased region" description="Low complexity" evidence="8">
    <location>
        <begin position="53"/>
        <end position="67"/>
    </location>
</feature>
<feature type="compositionally biased region" description="Polar residues" evidence="8">
    <location>
        <begin position="300"/>
        <end position="313"/>
    </location>
</feature>
<feature type="compositionally biased region" description="Polar residues" evidence="8">
    <location>
        <begin position="340"/>
        <end position="361"/>
    </location>
</feature>
<feature type="compositionally biased region" description="Low complexity" evidence="8">
    <location>
        <begin position="367"/>
        <end position="377"/>
    </location>
</feature>
<feature type="compositionally biased region" description="Polar residues" evidence="8">
    <location>
        <begin position="412"/>
        <end position="422"/>
    </location>
</feature>
<feature type="compositionally biased region" description="Polar residues" evidence="8">
    <location>
        <begin position="958"/>
        <end position="975"/>
    </location>
</feature>
<feature type="compositionally biased region" description="Acidic residues" evidence="8">
    <location>
        <begin position="977"/>
        <end position="990"/>
    </location>
</feature>
<feature type="compositionally biased region" description="Low complexity" evidence="8">
    <location>
        <begin position="1014"/>
        <end position="1024"/>
    </location>
</feature>
<feature type="compositionally biased region" description="Polar residues" evidence="8">
    <location>
        <begin position="1025"/>
        <end position="1034"/>
    </location>
</feature>
<feature type="modified residue" description="Phosphoserine" evidence="27 28 29">
    <location>
        <position position="231"/>
    </location>
</feature>
<feature type="modified residue" description="Phosphoserine" evidence="2">
    <location>
        <position position="356"/>
    </location>
</feature>
<feature type="modified residue" description="Phosphoserine" evidence="2">
    <location>
        <position position="358"/>
    </location>
</feature>
<feature type="modified residue" description="Phosphoserine" evidence="2">
    <location>
        <position position="695"/>
    </location>
</feature>
<feature type="modified residue" description="Phosphotyrosine; by NTRK2" evidence="2">
    <location>
        <position position="829"/>
    </location>
</feature>
<feature type="modified residue" description="Phosphotyrosine" evidence="2">
    <location>
        <position position="1323"/>
    </location>
</feature>
<feature type="modified residue" description="Phosphoserine" evidence="2">
    <location>
        <position position="1519"/>
    </location>
</feature>
<feature type="lipid moiety-binding region" description="N-myristoyl glycine" evidence="3">
    <location>
        <position position="2"/>
    </location>
</feature>
<feature type="cross-link" description="Glycyl lysine isopeptide (Lys-Gly) (interchain with G-Cter in ubiquitin)" evidence="18">
    <location>
        <position position="1404"/>
    </location>
</feature>
<feature type="cross-link" description="Glycyl lysine isopeptide (Lys-Gly) (interchain with G-Cter in ubiquitin)" evidence="18">
    <location>
        <position position="1420"/>
    </location>
</feature>
<feature type="splice variant" id="VSP_055865" description="In isoform 2." evidence="22">
    <location>
        <begin position="715"/>
        <end position="739"/>
    </location>
</feature>
<feature type="splice variant" id="VSP_055866" description="In isoform 2." evidence="22">
    <location>
        <begin position="797"/>
        <end position="831"/>
    </location>
</feature>
<feature type="sequence variant" id="VAR_087427" description="In NEDLDS; uncertain significance." evidence="19">
    <original>R</original>
    <variation>C</variation>
    <location>
        <position position="23"/>
    </location>
</feature>
<feature type="sequence variant" id="VAR_051991" description="In dbSNP:rs2070418.">
    <original>G</original>
    <variation>R</variation>
    <location>
        <position position="247"/>
    </location>
</feature>
<feature type="sequence variant" id="VAR_051992" description="In dbSNP:rs2070417.">
    <original>G</original>
    <variation>V</variation>
    <location>
        <position position="247"/>
    </location>
</feature>
<feature type="sequence variant" id="VAR_087428" description="In NEDLDS; uncertain significance." evidence="19">
    <original>G</original>
    <variation>V</variation>
    <location>
        <position position="328"/>
    </location>
</feature>
<feature type="sequence variant" id="VAR_087429" description="In NEDLDS; uncertain significance." evidence="19">
    <original>G</original>
    <variation>R</variation>
    <location>
        <position position="382"/>
    </location>
</feature>
<feature type="sequence variant" id="VAR_035977" description="In a colorectal cancer sample; somatic mutation; dbSNP:rs1192824496." evidence="11">
    <original>R</original>
    <variation>C</variation>
    <location>
        <position position="678"/>
    </location>
</feature>
<feature type="sequence variant" id="VAR_051993" description="In dbSNP:rs16987932." evidence="20">
    <original>Q</original>
    <variation>H</variation>
    <location>
        <position position="844"/>
    </location>
</feature>
<feature type="sequence variant" id="VAR_087430" description="In NEDLDS; uncertain significance." evidence="19">
    <original>L</original>
    <variation>F</variation>
    <location>
        <position position="862"/>
    </location>
</feature>
<feature type="sequence variant" id="VAR_067424" description="In dbSNP:rs77092908." evidence="15">
    <original>R</original>
    <variation>H</variation>
    <location>
        <position position="1007"/>
    </location>
</feature>
<feature type="sequence variant" id="VAR_071102" description="In dbSNP:rs75483199." evidence="9">
    <original>D</original>
    <variation>V</variation>
    <location>
        <position position="1023"/>
    </location>
</feature>
<feature type="sequence variant" id="VAR_035978" description="In NEDLDS; uncertain significance; dbSNP:rs1319513413." evidence="11 19">
    <original>A</original>
    <variation>V</variation>
    <location>
        <position position="1339"/>
    </location>
</feature>
<feature type="sequence variant" id="VAR_087431" description="In NEDLDS; uncertain significance." evidence="19">
    <original>A</original>
    <variation>E</variation>
    <location>
        <position position="1547"/>
    </location>
</feature>
<feature type="mutagenesis site" description="Strongly reduces affinity for SDC1." evidence="16">
    <original>K</original>
    <variation>E</variation>
    <location>
        <position position="879"/>
    </location>
</feature>
<feature type="mutagenesis site" description="Strongly reduces affinity for SDC1." evidence="16">
    <original>K</original>
    <variation>E</variation>
    <location>
        <position position="912"/>
    </location>
</feature>
<feature type="mutagenesis site" description="Decreased ubiquitination and increased abundance." evidence="18">
    <original>K</original>
    <variation>R</variation>
    <location>
        <position position="1404"/>
    </location>
</feature>
<feature type="mutagenesis site" description="Decreased ubiquitination and increased abundance." evidence="18">
    <original>K</original>
    <variation>R</variation>
    <location>
        <position position="1420"/>
    </location>
</feature>
<feature type="sequence conflict" description="In Ref. 1; AAA98443." evidence="24" ref="1">
    <original>KH</original>
    <variation>ND</variation>
    <location>
        <begin position="24"/>
        <end position="25"/>
    </location>
</feature>
<feature type="sequence conflict" description="In Ref. 1; AAA98443." evidence="24" ref="1">
    <original>G</original>
    <variation>M</variation>
    <location>
        <position position="247"/>
    </location>
</feature>
<feature type="sequence conflict" description="In Ref. 3; AAI43981." evidence="24" ref="3">
    <original>T</original>
    <variation>I</variation>
    <location>
        <position position="881"/>
    </location>
</feature>
<feature type="sequence conflict" description="In Ref. 1; AAA98443." evidence="24" ref="1">
    <original>G</original>
    <variation>D</variation>
    <location>
        <position position="951"/>
    </location>
</feature>
<feature type="sequence conflict" description="In Ref. 1; AAA98443." evidence="24" ref="1">
    <original>S</original>
    <variation>N</variation>
    <location>
        <position position="1018"/>
    </location>
</feature>
<feature type="sequence conflict" description="In Ref. 1; AAA98443." evidence="24" ref="1">
    <original>KL</original>
    <variation>NV</variation>
    <location>
        <begin position="1040"/>
        <end position="1041"/>
    </location>
</feature>
<feature type="sequence conflict" description="In Ref. 1; AAA98443." evidence="24" ref="1">
    <original>S</original>
    <variation>I</variation>
    <location>
        <position position="1148"/>
    </location>
</feature>
<feature type="strand" evidence="32">
    <location>
        <begin position="435"/>
        <end position="449"/>
    </location>
</feature>
<feature type="turn" evidence="32">
    <location>
        <begin position="450"/>
        <end position="452"/>
    </location>
</feature>
<feature type="strand" evidence="32">
    <location>
        <begin position="453"/>
        <end position="456"/>
    </location>
</feature>
<feature type="strand" evidence="32">
    <location>
        <begin position="463"/>
        <end position="470"/>
    </location>
</feature>
<feature type="strand" evidence="32">
    <location>
        <begin position="473"/>
        <end position="477"/>
    </location>
</feature>
<feature type="strand" evidence="32">
    <location>
        <begin position="481"/>
        <end position="483"/>
    </location>
</feature>
<feature type="strand" evidence="32">
    <location>
        <begin position="492"/>
        <end position="496"/>
    </location>
</feature>
<feature type="strand" evidence="32">
    <location>
        <begin position="501"/>
        <end position="504"/>
    </location>
</feature>
<feature type="strand" evidence="32">
    <location>
        <begin position="512"/>
        <end position="518"/>
    </location>
</feature>
<feature type="strand" evidence="32">
    <location>
        <begin position="520"/>
        <end position="522"/>
    </location>
</feature>
<feature type="strand" evidence="32">
    <location>
        <begin position="524"/>
        <end position="528"/>
    </location>
</feature>
<feature type="helix" evidence="32">
    <location>
        <begin position="532"/>
        <end position="554"/>
    </location>
</feature>
<feature type="helix" evidence="32">
    <location>
        <begin position="559"/>
        <end position="587"/>
    </location>
</feature>
<feature type="turn" evidence="32">
    <location>
        <begin position="588"/>
        <end position="590"/>
    </location>
</feature>
<feature type="helix" evidence="32">
    <location>
        <begin position="594"/>
        <end position="629"/>
    </location>
</feature>
<feature type="helix" evidence="32">
    <location>
        <begin position="636"/>
        <end position="640"/>
    </location>
</feature>
<feature type="helix" evidence="32">
    <location>
        <begin position="645"/>
        <end position="654"/>
    </location>
</feature>
<feature type="helix" evidence="32">
    <location>
        <begin position="659"/>
        <end position="667"/>
    </location>
</feature>
<feature type="strand" evidence="30">
    <location>
        <begin position="842"/>
        <end position="849"/>
    </location>
</feature>
<feature type="helix" evidence="33">
    <location>
        <begin position="850"/>
        <end position="852"/>
    </location>
</feature>
<feature type="turn" evidence="31">
    <location>
        <begin position="855"/>
        <end position="858"/>
    </location>
</feature>
<feature type="strand" evidence="30">
    <location>
        <begin position="859"/>
        <end position="865"/>
    </location>
</feature>
<feature type="strand" evidence="30">
    <location>
        <begin position="867"/>
        <end position="870"/>
    </location>
</feature>
<feature type="strand" evidence="30">
    <location>
        <begin position="872"/>
        <end position="878"/>
    </location>
</feature>
<feature type="helix" evidence="30">
    <location>
        <begin position="883"/>
        <end position="886"/>
    </location>
</feature>
<feature type="strand" evidence="30">
    <location>
        <begin position="894"/>
        <end position="898"/>
    </location>
</feature>
<feature type="helix" evidence="30">
    <location>
        <begin position="903"/>
        <end position="905"/>
    </location>
</feature>
<feature type="helix" evidence="30">
    <location>
        <begin position="908"/>
        <end position="916"/>
    </location>
</feature>
<feature type="strand" evidence="30">
    <location>
        <begin position="917"/>
        <end position="926"/>
    </location>
</feature>
<dbReference type="EMBL" id="U16296">
    <property type="protein sequence ID" value="AAA98443.1"/>
    <property type="molecule type" value="mRNA"/>
</dbReference>
<dbReference type="EMBL" id="AP000246">
    <property type="status" value="NOT_ANNOTATED_CDS"/>
    <property type="molecule type" value="Genomic_DNA"/>
</dbReference>
<dbReference type="EMBL" id="AP000247">
    <property type="status" value="NOT_ANNOTATED_CDS"/>
    <property type="molecule type" value="Genomic_DNA"/>
</dbReference>
<dbReference type="EMBL" id="AP000248">
    <property type="status" value="NOT_ANNOTATED_CDS"/>
    <property type="molecule type" value="Genomic_DNA"/>
</dbReference>
<dbReference type="EMBL" id="AP000249">
    <property type="status" value="NOT_ANNOTATED_CDS"/>
    <property type="molecule type" value="Genomic_DNA"/>
</dbReference>
<dbReference type="EMBL" id="AP000250">
    <property type="status" value="NOT_ANNOTATED_CDS"/>
    <property type="molecule type" value="Genomic_DNA"/>
</dbReference>
<dbReference type="EMBL" id="AP000251">
    <property type="status" value="NOT_ANNOTATED_CDS"/>
    <property type="molecule type" value="Genomic_DNA"/>
</dbReference>
<dbReference type="EMBL" id="AP000563">
    <property type="status" value="NOT_ANNOTATED_CDS"/>
    <property type="molecule type" value="Genomic_DNA"/>
</dbReference>
<dbReference type="EMBL" id="BC117192">
    <property type="protein sequence ID" value="AAI17193.1"/>
    <property type="molecule type" value="mRNA"/>
</dbReference>
<dbReference type="EMBL" id="BC117196">
    <property type="protein sequence ID" value="AAI17197.1"/>
    <property type="molecule type" value="mRNA"/>
</dbReference>
<dbReference type="EMBL" id="BC143980">
    <property type="protein sequence ID" value="AAI43981.1"/>
    <property type="molecule type" value="mRNA"/>
</dbReference>
<dbReference type="CCDS" id="CCDS13609.1">
    <molecule id="Q13009-1"/>
</dbReference>
<dbReference type="RefSeq" id="NP_001340617.1">
    <molecule id="Q13009-1"/>
    <property type="nucleotide sequence ID" value="NM_001353688.1"/>
</dbReference>
<dbReference type="RefSeq" id="NP_001340618.1">
    <molecule id="Q13009-1"/>
    <property type="nucleotide sequence ID" value="NM_001353689.1"/>
</dbReference>
<dbReference type="RefSeq" id="NP_001340619.1">
    <molecule id="Q13009-1"/>
    <property type="nucleotide sequence ID" value="NM_001353690.1"/>
</dbReference>
<dbReference type="RefSeq" id="NP_001340620.1">
    <molecule id="Q13009-1"/>
    <property type="nucleotide sequence ID" value="NM_001353691.1"/>
</dbReference>
<dbReference type="RefSeq" id="NP_001340621.1">
    <molecule id="Q13009-1"/>
    <property type="nucleotide sequence ID" value="NM_001353692.1"/>
</dbReference>
<dbReference type="RefSeq" id="NP_001340622.1">
    <molecule id="Q13009-1"/>
    <property type="nucleotide sequence ID" value="NM_001353693.1"/>
</dbReference>
<dbReference type="RefSeq" id="NP_001340623.1">
    <molecule id="Q13009-1"/>
    <property type="nucleotide sequence ID" value="NM_001353694.2"/>
</dbReference>
<dbReference type="RefSeq" id="NP_003244.2">
    <molecule id="Q13009-1"/>
    <property type="nucleotide sequence ID" value="NM_003253.3"/>
</dbReference>
<dbReference type="RefSeq" id="XP_005261094.1">
    <property type="nucleotide sequence ID" value="XM_005261037.1"/>
</dbReference>
<dbReference type="RefSeq" id="XP_005261095.1">
    <property type="nucleotide sequence ID" value="XM_005261038.2"/>
</dbReference>
<dbReference type="RefSeq" id="XP_011528013.1">
    <property type="nucleotide sequence ID" value="XM_011529711.1"/>
</dbReference>
<dbReference type="RefSeq" id="XP_011528014.1">
    <property type="nucleotide sequence ID" value="XM_011529712.1"/>
</dbReference>
<dbReference type="RefSeq" id="XP_011528015.1">
    <property type="nucleotide sequence ID" value="XM_011529713.1"/>
</dbReference>
<dbReference type="RefSeq" id="XP_016883936.1">
    <property type="nucleotide sequence ID" value="XM_017028447.1"/>
</dbReference>
<dbReference type="RefSeq" id="XP_016883937.1">
    <property type="nucleotide sequence ID" value="XM_017028448.1"/>
</dbReference>
<dbReference type="RefSeq" id="XP_016883938.1">
    <property type="nucleotide sequence ID" value="XM_017028449.1"/>
</dbReference>
<dbReference type="RefSeq" id="XP_016883939.1">
    <property type="nucleotide sequence ID" value="XM_017028450.1"/>
</dbReference>
<dbReference type="RefSeq" id="XP_016883940.1">
    <property type="nucleotide sequence ID" value="XM_017028451.1"/>
</dbReference>
<dbReference type="RefSeq" id="XP_016883941.1">
    <property type="nucleotide sequence ID" value="XM_017028452.1"/>
</dbReference>
<dbReference type="RefSeq" id="XP_016883942.1">
    <property type="nucleotide sequence ID" value="XM_017028453.1"/>
</dbReference>
<dbReference type="RefSeq" id="XP_047296925.1">
    <molecule id="Q13009-1"/>
    <property type="nucleotide sequence ID" value="XM_047440969.1"/>
</dbReference>
<dbReference type="PDB" id="2D8I">
    <property type="method" value="NMR"/>
    <property type="chains" value="A=835-935"/>
</dbReference>
<dbReference type="PDB" id="3KZD">
    <property type="method" value="X-ray"/>
    <property type="resolution" value="1.30 A"/>
    <property type="chains" value="A=841-930"/>
</dbReference>
<dbReference type="PDB" id="3KZE">
    <property type="method" value="X-ray"/>
    <property type="resolution" value="1.80 A"/>
    <property type="chains" value="A/B/C=841-930"/>
</dbReference>
<dbReference type="PDB" id="4GVC">
    <property type="method" value="X-ray"/>
    <property type="resolution" value="1.54 A"/>
    <property type="chains" value="A=841-930"/>
</dbReference>
<dbReference type="PDB" id="4GVD">
    <property type="method" value="X-ray"/>
    <property type="resolution" value="1.85 A"/>
    <property type="chains" value="A/B=841-930"/>
</dbReference>
<dbReference type="PDB" id="4K2O">
    <property type="method" value="X-ray"/>
    <property type="resolution" value="2.15 A"/>
    <property type="chains" value="A=429-702"/>
</dbReference>
<dbReference type="PDB" id="4K2P">
    <property type="method" value="X-ray"/>
    <property type="resolution" value="1.98 A"/>
    <property type="chains" value="A/B/C/D=429-702"/>
</dbReference>
<dbReference type="PDB" id="4NXP">
    <property type="method" value="X-ray"/>
    <property type="resolution" value="2.30 A"/>
    <property type="chains" value="A=841-930"/>
</dbReference>
<dbReference type="PDB" id="4NXQ">
    <property type="method" value="X-ray"/>
    <property type="resolution" value="2.10 A"/>
    <property type="chains" value="A/B/C=841-930"/>
</dbReference>
<dbReference type="PDB" id="4NXR">
    <property type="method" value="X-ray"/>
    <property type="resolution" value="1.90 A"/>
    <property type="chains" value="A=841-930"/>
</dbReference>
<dbReference type="PDBsum" id="2D8I"/>
<dbReference type="PDBsum" id="3KZD"/>
<dbReference type="PDBsum" id="3KZE"/>
<dbReference type="PDBsum" id="4GVC"/>
<dbReference type="PDBsum" id="4GVD"/>
<dbReference type="PDBsum" id="4K2O"/>
<dbReference type="PDBsum" id="4K2P"/>
<dbReference type="PDBsum" id="4NXP"/>
<dbReference type="PDBsum" id="4NXQ"/>
<dbReference type="PDBsum" id="4NXR"/>
<dbReference type="BMRB" id="Q13009"/>
<dbReference type="SMR" id="Q13009"/>
<dbReference type="BioGRID" id="112930">
    <property type="interactions" value="205"/>
</dbReference>
<dbReference type="CORUM" id="Q13009"/>
<dbReference type="DIP" id="DIP-38309N"/>
<dbReference type="ELM" id="Q13009"/>
<dbReference type="FunCoup" id="Q13009">
    <property type="interactions" value="934"/>
</dbReference>
<dbReference type="IntAct" id="Q13009">
    <property type="interactions" value="91"/>
</dbReference>
<dbReference type="MINT" id="Q13009"/>
<dbReference type="STRING" id="9606.ENSP00000286827"/>
<dbReference type="ChEMBL" id="CHEMBL3232697"/>
<dbReference type="GlyGen" id="Q13009">
    <property type="glycosylation" value="2 sites, 1 O-linked glycan (1 site)"/>
</dbReference>
<dbReference type="iPTMnet" id="Q13009"/>
<dbReference type="PhosphoSitePlus" id="Q13009"/>
<dbReference type="BioMuta" id="TIAM1"/>
<dbReference type="DMDM" id="152031709"/>
<dbReference type="jPOST" id="Q13009"/>
<dbReference type="MassIVE" id="Q13009"/>
<dbReference type="PaxDb" id="9606-ENSP00000286827"/>
<dbReference type="PeptideAtlas" id="Q13009"/>
<dbReference type="ProteomicsDB" id="24940"/>
<dbReference type="ProteomicsDB" id="59099">
    <molecule id="Q13009-1"/>
</dbReference>
<dbReference type="Pumba" id="Q13009"/>
<dbReference type="Antibodypedia" id="4172">
    <property type="antibodies" value="228 antibodies from 32 providers"/>
</dbReference>
<dbReference type="DNASU" id="7074"/>
<dbReference type="Ensembl" id="ENST00000286827.7">
    <molecule id="Q13009-1"/>
    <property type="protein sequence ID" value="ENSP00000286827.3"/>
    <property type="gene ID" value="ENSG00000156299.15"/>
</dbReference>
<dbReference type="Ensembl" id="ENST00000455508.2">
    <molecule id="Q13009-2"/>
    <property type="protein sequence ID" value="ENSP00000388217.2"/>
    <property type="gene ID" value="ENSG00000156299.15"/>
</dbReference>
<dbReference type="Ensembl" id="ENST00000541036.6">
    <molecule id="Q13009-1"/>
    <property type="protein sequence ID" value="ENSP00000441570.2"/>
    <property type="gene ID" value="ENSG00000156299.15"/>
</dbReference>
<dbReference type="GeneID" id="7074"/>
<dbReference type="KEGG" id="hsa:7074"/>
<dbReference type="MANE-Select" id="ENST00000541036.6">
    <property type="protein sequence ID" value="ENSP00000441570.2"/>
    <property type="RefSeq nucleotide sequence ID" value="NM_001353694.2"/>
    <property type="RefSeq protein sequence ID" value="NP_001340623.1"/>
</dbReference>
<dbReference type="UCSC" id="uc002yow.2">
    <molecule id="Q13009-1"/>
    <property type="organism name" value="human"/>
</dbReference>
<dbReference type="AGR" id="HGNC:11805"/>
<dbReference type="CTD" id="7074"/>
<dbReference type="DisGeNET" id="7074"/>
<dbReference type="GeneCards" id="TIAM1"/>
<dbReference type="HGNC" id="HGNC:11805">
    <property type="gene designation" value="TIAM1"/>
</dbReference>
<dbReference type="HPA" id="ENSG00000156299">
    <property type="expression patterns" value="Tissue enriched (brain)"/>
</dbReference>
<dbReference type="MalaCards" id="TIAM1"/>
<dbReference type="MIM" id="600687">
    <property type="type" value="gene"/>
</dbReference>
<dbReference type="MIM" id="619908">
    <property type="type" value="phenotype"/>
</dbReference>
<dbReference type="neXtProt" id="NX_Q13009"/>
<dbReference type="OpenTargets" id="ENSG00000156299"/>
<dbReference type="Orphanet" id="528084">
    <property type="disease" value="Non-specific syndromic intellectual disability"/>
</dbReference>
<dbReference type="PharmGKB" id="PA36514"/>
<dbReference type="VEuPathDB" id="HostDB:ENSG00000156299"/>
<dbReference type="eggNOG" id="KOG3519">
    <property type="taxonomic scope" value="Eukaryota"/>
</dbReference>
<dbReference type="GeneTree" id="ENSGT00940000156294"/>
<dbReference type="HOGENOM" id="CLU_000494_3_0_1"/>
<dbReference type="InParanoid" id="Q13009"/>
<dbReference type="OMA" id="DACNADF"/>
<dbReference type="OrthoDB" id="8059989at2759"/>
<dbReference type="PAN-GO" id="Q13009">
    <property type="GO annotations" value="6 GO annotations based on evolutionary models"/>
</dbReference>
<dbReference type="PhylomeDB" id="Q13009"/>
<dbReference type="TreeFam" id="TF319686"/>
<dbReference type="PathwayCommons" id="Q13009"/>
<dbReference type="Reactome" id="R-HSA-193648">
    <property type="pathway name" value="NRAGE signals death through JNK"/>
</dbReference>
<dbReference type="Reactome" id="R-HSA-3928662">
    <property type="pathway name" value="EPHB-mediated forward signaling"/>
</dbReference>
<dbReference type="Reactome" id="R-HSA-3928665">
    <property type="pathway name" value="EPH-ephrin mediated repulsion of cells"/>
</dbReference>
<dbReference type="Reactome" id="R-HSA-416482">
    <property type="pathway name" value="G alpha (12/13) signalling events"/>
</dbReference>
<dbReference type="Reactome" id="R-HSA-8980692">
    <property type="pathway name" value="RHOA GTPase cycle"/>
</dbReference>
<dbReference type="Reactome" id="R-HSA-9013148">
    <property type="pathway name" value="CDC42 GTPase cycle"/>
</dbReference>
<dbReference type="Reactome" id="R-HSA-9013149">
    <property type="pathway name" value="RAC1 GTPase cycle"/>
</dbReference>
<dbReference type="Reactome" id="R-HSA-9013404">
    <property type="pathway name" value="RAC2 GTPase cycle"/>
</dbReference>
<dbReference type="Reactome" id="R-HSA-9013423">
    <property type="pathway name" value="RAC3 GTPase cycle"/>
</dbReference>
<dbReference type="Reactome" id="R-HSA-9032845">
    <property type="pathway name" value="Activated NTRK2 signals through CDK5"/>
</dbReference>
<dbReference type="SignaLink" id="Q13009"/>
<dbReference type="SIGNOR" id="Q13009"/>
<dbReference type="BioGRID-ORCS" id="7074">
    <property type="hits" value="22 hits in 1161 CRISPR screens"/>
</dbReference>
<dbReference type="ChiTaRS" id="TIAM1">
    <property type="organism name" value="human"/>
</dbReference>
<dbReference type="EvolutionaryTrace" id="Q13009"/>
<dbReference type="GenomeRNAi" id="7074"/>
<dbReference type="Pharos" id="Q13009">
    <property type="development level" value="Tbio"/>
</dbReference>
<dbReference type="PRO" id="PR:Q13009"/>
<dbReference type="Proteomes" id="UP000005640">
    <property type="component" value="Chromosome 21"/>
</dbReference>
<dbReference type="RNAct" id="Q13009">
    <property type="molecule type" value="protein"/>
</dbReference>
<dbReference type="Bgee" id="ENSG00000156299">
    <property type="expression patterns" value="Expressed in cerebellar vermis and 199 other cell types or tissues"/>
</dbReference>
<dbReference type="ExpressionAtlas" id="Q13009">
    <property type="expression patterns" value="baseline and differential"/>
</dbReference>
<dbReference type="GO" id="GO:0044291">
    <property type="term" value="C:cell-cell contact zone"/>
    <property type="evidence" value="ECO:0000314"/>
    <property type="project" value="UniProtKB"/>
</dbReference>
<dbReference type="GO" id="GO:0005911">
    <property type="term" value="C:cell-cell junction"/>
    <property type="evidence" value="ECO:0000314"/>
    <property type="project" value="UniProtKB"/>
</dbReference>
<dbReference type="GO" id="GO:0005829">
    <property type="term" value="C:cytosol"/>
    <property type="evidence" value="ECO:0000314"/>
    <property type="project" value="ParkinsonsUK-UCL"/>
</dbReference>
<dbReference type="GO" id="GO:0005886">
    <property type="term" value="C:plasma membrane"/>
    <property type="evidence" value="ECO:0000314"/>
    <property type="project" value="ParkinsonsUK-UCL"/>
</dbReference>
<dbReference type="GO" id="GO:0045202">
    <property type="term" value="C:synapse"/>
    <property type="evidence" value="ECO:0000318"/>
    <property type="project" value="GO_Central"/>
</dbReference>
<dbReference type="GO" id="GO:0005085">
    <property type="term" value="F:guanyl-nucleotide exchange factor activity"/>
    <property type="evidence" value="ECO:0000314"/>
    <property type="project" value="ParkinsonsUK-UCL"/>
</dbReference>
<dbReference type="GO" id="GO:0019900">
    <property type="term" value="F:kinase binding"/>
    <property type="evidence" value="ECO:0000353"/>
    <property type="project" value="ParkinsonsUK-UCL"/>
</dbReference>
<dbReference type="GO" id="GO:0008289">
    <property type="term" value="F:lipid binding"/>
    <property type="evidence" value="ECO:0007669"/>
    <property type="project" value="UniProtKB-KW"/>
</dbReference>
<dbReference type="GO" id="GO:0090630">
    <property type="term" value="P:activation of GTPase activity"/>
    <property type="evidence" value="ECO:0000314"/>
    <property type="project" value="ParkinsonsUK-UCL"/>
</dbReference>
<dbReference type="GO" id="GO:0016477">
    <property type="term" value="P:cell migration"/>
    <property type="evidence" value="ECO:0000315"/>
    <property type="project" value="UniProtKB"/>
</dbReference>
<dbReference type="GO" id="GO:0007160">
    <property type="term" value="P:cell-matrix adhesion"/>
    <property type="evidence" value="ECO:0000315"/>
    <property type="project" value="UniProtKB"/>
</dbReference>
<dbReference type="GO" id="GO:0048013">
    <property type="term" value="P:ephrin receptor signaling pathway"/>
    <property type="evidence" value="ECO:0000304"/>
    <property type="project" value="Reactome"/>
</dbReference>
<dbReference type="GO" id="GO:0050772">
    <property type="term" value="P:positive regulation of axonogenesis"/>
    <property type="evidence" value="ECO:0000318"/>
    <property type="project" value="GO_Central"/>
</dbReference>
<dbReference type="GO" id="GO:0030335">
    <property type="term" value="P:positive regulation of cell migration"/>
    <property type="evidence" value="ECO:0000314"/>
    <property type="project" value="BHF-UCL"/>
</dbReference>
<dbReference type="GO" id="GO:0008284">
    <property type="term" value="P:positive regulation of cell population proliferation"/>
    <property type="evidence" value="ECO:0000314"/>
    <property type="project" value="BHF-UCL"/>
</dbReference>
<dbReference type="GO" id="GO:0010718">
    <property type="term" value="P:positive regulation of epithelial to mesenchymal transition"/>
    <property type="evidence" value="ECO:0000303"/>
    <property type="project" value="BHF-UCL"/>
</dbReference>
<dbReference type="GO" id="GO:0032092">
    <property type="term" value="P:positive regulation of protein binding"/>
    <property type="evidence" value="ECO:0000314"/>
    <property type="project" value="ParkinsonsUK-UCL"/>
</dbReference>
<dbReference type="GO" id="GO:0065003">
    <property type="term" value="P:protein-containing complex assembly"/>
    <property type="evidence" value="ECO:0000314"/>
    <property type="project" value="ParkinsonsUK-UCL"/>
</dbReference>
<dbReference type="GO" id="GO:0016601">
    <property type="term" value="P:Rac protein signal transduction"/>
    <property type="evidence" value="ECO:0000314"/>
    <property type="project" value="BHF-UCL"/>
</dbReference>
<dbReference type="GO" id="GO:1904338">
    <property type="term" value="P:regulation of dopaminergic neuron differentiation"/>
    <property type="evidence" value="ECO:0000250"/>
    <property type="project" value="ParkinsonsUK-UCL"/>
</dbReference>
<dbReference type="GO" id="GO:0010717">
    <property type="term" value="P:regulation of epithelial to mesenchymal transition"/>
    <property type="evidence" value="ECO:0000314"/>
    <property type="project" value="BHF-UCL"/>
</dbReference>
<dbReference type="GO" id="GO:2000050">
    <property type="term" value="P:regulation of non-canonical Wnt signaling pathway"/>
    <property type="evidence" value="ECO:0000250"/>
    <property type="project" value="ParkinsonsUK-UCL"/>
</dbReference>
<dbReference type="GO" id="GO:0051056">
    <property type="term" value="P:regulation of small GTPase mediated signal transduction"/>
    <property type="evidence" value="ECO:0000304"/>
    <property type="project" value="Reactome"/>
</dbReference>
<dbReference type="GO" id="GO:0007264">
    <property type="term" value="P:small GTPase-mediated signal transduction"/>
    <property type="evidence" value="ECO:0000318"/>
    <property type="project" value="GO_Central"/>
</dbReference>
<dbReference type="GO" id="GO:0060071">
    <property type="term" value="P:Wnt signaling pathway, planar cell polarity pathway"/>
    <property type="evidence" value="ECO:0000303"/>
    <property type="project" value="ParkinsonsUK-UCL"/>
</dbReference>
<dbReference type="CDD" id="cd01230">
    <property type="entry name" value="PH1_Tiam1_2"/>
    <property type="match status" value="1"/>
</dbReference>
<dbReference type="CDD" id="cd01255">
    <property type="entry name" value="PH2_Tiam1_2"/>
    <property type="match status" value="1"/>
</dbReference>
<dbReference type="CDD" id="cd00160">
    <property type="entry name" value="RhoGEF"/>
    <property type="match status" value="1"/>
</dbReference>
<dbReference type="FunFam" id="1.20.900.10:FF:000012">
    <property type="entry name" value="T cell lymphoma invasion and metastasis 1"/>
    <property type="match status" value="1"/>
</dbReference>
<dbReference type="FunFam" id="2.30.29.30:FF:000065">
    <property type="entry name" value="T cell lymphoma invasion and metastasis 1"/>
    <property type="match status" value="1"/>
</dbReference>
<dbReference type="FunFam" id="2.30.29.30:FF:000121">
    <property type="entry name" value="T cell lymphoma invasion and metastasis 1"/>
    <property type="match status" value="1"/>
</dbReference>
<dbReference type="FunFam" id="2.30.42.10:FF:000154">
    <property type="entry name" value="T cell lymphoma invasion and metastasis 1"/>
    <property type="match status" value="1"/>
</dbReference>
<dbReference type="Gene3D" id="2.30.42.10">
    <property type="match status" value="1"/>
</dbReference>
<dbReference type="Gene3D" id="6.10.140.680">
    <property type="match status" value="1"/>
</dbReference>
<dbReference type="Gene3D" id="1.20.900.10">
    <property type="entry name" value="Dbl homology (DH) domain"/>
    <property type="match status" value="1"/>
</dbReference>
<dbReference type="Gene3D" id="2.30.29.30">
    <property type="entry name" value="Pleckstrin-homology domain (PH domain)/Phosphotyrosine-binding domain (PTB)"/>
    <property type="match status" value="2"/>
</dbReference>
<dbReference type="InterPro" id="IPR035899">
    <property type="entry name" value="DBL_dom_sf"/>
</dbReference>
<dbReference type="InterPro" id="IPR000219">
    <property type="entry name" value="DH_dom"/>
</dbReference>
<dbReference type="InterPro" id="IPR001331">
    <property type="entry name" value="GDS_CDC24_CS"/>
</dbReference>
<dbReference type="InterPro" id="IPR001478">
    <property type="entry name" value="PDZ"/>
</dbReference>
<dbReference type="InterPro" id="IPR036034">
    <property type="entry name" value="PDZ_sf"/>
</dbReference>
<dbReference type="InterPro" id="IPR011993">
    <property type="entry name" value="PH-like_dom_sf"/>
</dbReference>
<dbReference type="InterPro" id="IPR001849">
    <property type="entry name" value="PH_domain"/>
</dbReference>
<dbReference type="InterPro" id="IPR055230">
    <property type="entry name" value="PH_Tiam1/2"/>
</dbReference>
<dbReference type="InterPro" id="IPR003116">
    <property type="entry name" value="RBD_dom"/>
</dbReference>
<dbReference type="InterPro" id="IPR043537">
    <property type="entry name" value="Tiam1/Tiam2/Sif"/>
</dbReference>
<dbReference type="InterPro" id="IPR040655">
    <property type="entry name" value="TIAM1_CC-Ex"/>
</dbReference>
<dbReference type="PANTHER" id="PTHR46001:SF1">
    <property type="entry name" value="RHO GUANINE NUCLEOTIDE EXCHANGE FACTOR TIAM1"/>
    <property type="match status" value="1"/>
</dbReference>
<dbReference type="PANTHER" id="PTHR46001">
    <property type="entry name" value="TIAM (MAMMALIAN TUMOR INVASION AND METASTASIS FACTOR) HOMOLOG"/>
    <property type="match status" value="1"/>
</dbReference>
<dbReference type="Pfam" id="PF00595">
    <property type="entry name" value="PDZ"/>
    <property type="match status" value="1"/>
</dbReference>
<dbReference type="Pfam" id="PF00169">
    <property type="entry name" value="PH"/>
    <property type="match status" value="1"/>
</dbReference>
<dbReference type="Pfam" id="PF23014">
    <property type="entry name" value="PH_Tiam1"/>
    <property type="match status" value="1"/>
</dbReference>
<dbReference type="Pfam" id="PF02196">
    <property type="entry name" value="RBD"/>
    <property type="match status" value="1"/>
</dbReference>
<dbReference type="Pfam" id="PF00621">
    <property type="entry name" value="RhoGEF"/>
    <property type="match status" value="1"/>
</dbReference>
<dbReference type="Pfam" id="PF18385">
    <property type="entry name" value="Tiam_CC_Ex"/>
    <property type="match status" value="1"/>
</dbReference>
<dbReference type="SMART" id="SM00228">
    <property type="entry name" value="PDZ"/>
    <property type="match status" value="1"/>
</dbReference>
<dbReference type="SMART" id="SM00233">
    <property type="entry name" value="PH"/>
    <property type="match status" value="2"/>
</dbReference>
<dbReference type="SMART" id="SM00455">
    <property type="entry name" value="RBD"/>
    <property type="match status" value="1"/>
</dbReference>
<dbReference type="SMART" id="SM00325">
    <property type="entry name" value="RhoGEF"/>
    <property type="match status" value="1"/>
</dbReference>
<dbReference type="SUPFAM" id="SSF48065">
    <property type="entry name" value="DBL homology domain (DH-domain)"/>
    <property type="match status" value="1"/>
</dbReference>
<dbReference type="SUPFAM" id="SSF50156">
    <property type="entry name" value="PDZ domain-like"/>
    <property type="match status" value="1"/>
</dbReference>
<dbReference type="SUPFAM" id="SSF50729">
    <property type="entry name" value="PH domain-like"/>
    <property type="match status" value="2"/>
</dbReference>
<dbReference type="PROSITE" id="PS00741">
    <property type="entry name" value="DH_1"/>
    <property type="match status" value="1"/>
</dbReference>
<dbReference type="PROSITE" id="PS50010">
    <property type="entry name" value="DH_2"/>
    <property type="match status" value="1"/>
</dbReference>
<dbReference type="PROSITE" id="PS50106">
    <property type="entry name" value="PDZ"/>
    <property type="match status" value="1"/>
</dbReference>
<dbReference type="PROSITE" id="PS50003">
    <property type="entry name" value="PH_DOMAIN"/>
    <property type="match status" value="1"/>
</dbReference>
<dbReference type="PROSITE" id="PS50898">
    <property type="entry name" value="RBD"/>
    <property type="match status" value="1"/>
</dbReference>